<dbReference type="EMBL" id="EU262887">
    <property type="protein sequence ID" value="ABW98708.1"/>
    <property type="molecule type" value="Genomic_DNA"/>
</dbReference>
<dbReference type="RefSeq" id="YP_001687141.1">
    <property type="nucleotide sequence ID" value="NC_010358.2"/>
</dbReference>
<dbReference type="SMR" id="B0Z4N0"/>
<dbReference type="GeneID" id="5951820"/>
<dbReference type="GO" id="GO:0009535">
    <property type="term" value="C:chloroplast thylakoid membrane"/>
    <property type="evidence" value="ECO:0007669"/>
    <property type="project" value="UniProtKB-SubCell"/>
</dbReference>
<dbReference type="GO" id="GO:0045259">
    <property type="term" value="C:proton-transporting ATP synthase complex"/>
    <property type="evidence" value="ECO:0007669"/>
    <property type="project" value="UniProtKB-KW"/>
</dbReference>
<dbReference type="GO" id="GO:0033177">
    <property type="term" value="C:proton-transporting two-sector ATPase complex, proton-transporting domain"/>
    <property type="evidence" value="ECO:0007669"/>
    <property type="project" value="InterPro"/>
</dbReference>
<dbReference type="GO" id="GO:0008289">
    <property type="term" value="F:lipid binding"/>
    <property type="evidence" value="ECO:0007669"/>
    <property type="project" value="UniProtKB-KW"/>
</dbReference>
<dbReference type="GO" id="GO:0046933">
    <property type="term" value="F:proton-transporting ATP synthase activity, rotational mechanism"/>
    <property type="evidence" value="ECO:0007669"/>
    <property type="project" value="UniProtKB-UniRule"/>
</dbReference>
<dbReference type="CDD" id="cd18183">
    <property type="entry name" value="ATP-synt_Fo_c_ATPH"/>
    <property type="match status" value="1"/>
</dbReference>
<dbReference type="FunFam" id="1.20.20.10:FF:000001">
    <property type="entry name" value="ATP synthase subunit c, chloroplastic"/>
    <property type="match status" value="1"/>
</dbReference>
<dbReference type="Gene3D" id="1.20.20.10">
    <property type="entry name" value="F1F0 ATP synthase subunit C"/>
    <property type="match status" value="1"/>
</dbReference>
<dbReference type="HAMAP" id="MF_01396">
    <property type="entry name" value="ATP_synth_c_bact"/>
    <property type="match status" value="1"/>
</dbReference>
<dbReference type="InterPro" id="IPR005953">
    <property type="entry name" value="ATP_synth_csu_bac/chlpt"/>
</dbReference>
<dbReference type="InterPro" id="IPR000454">
    <property type="entry name" value="ATP_synth_F0_csu"/>
</dbReference>
<dbReference type="InterPro" id="IPR020537">
    <property type="entry name" value="ATP_synth_F0_csu_DDCD_BS"/>
</dbReference>
<dbReference type="InterPro" id="IPR038662">
    <property type="entry name" value="ATP_synth_F0_csu_sf"/>
</dbReference>
<dbReference type="InterPro" id="IPR002379">
    <property type="entry name" value="ATPase_proteolipid_c-like_dom"/>
</dbReference>
<dbReference type="InterPro" id="IPR035921">
    <property type="entry name" value="F/V-ATP_Csub_sf"/>
</dbReference>
<dbReference type="NCBIfam" id="TIGR01260">
    <property type="entry name" value="ATP_synt_c"/>
    <property type="match status" value="1"/>
</dbReference>
<dbReference type="NCBIfam" id="NF005608">
    <property type="entry name" value="PRK07354.1"/>
    <property type="match status" value="1"/>
</dbReference>
<dbReference type="PANTHER" id="PTHR10031">
    <property type="entry name" value="ATP SYNTHASE LIPID-BINDING PROTEIN, MITOCHONDRIAL"/>
    <property type="match status" value="1"/>
</dbReference>
<dbReference type="PANTHER" id="PTHR10031:SF0">
    <property type="entry name" value="ATPASE PROTEIN 9"/>
    <property type="match status" value="1"/>
</dbReference>
<dbReference type="Pfam" id="PF00137">
    <property type="entry name" value="ATP-synt_C"/>
    <property type="match status" value="1"/>
</dbReference>
<dbReference type="PRINTS" id="PR00124">
    <property type="entry name" value="ATPASEC"/>
</dbReference>
<dbReference type="SUPFAM" id="SSF81333">
    <property type="entry name" value="F1F0 ATP synthase subunit C"/>
    <property type="match status" value="1"/>
</dbReference>
<dbReference type="PROSITE" id="PS00605">
    <property type="entry name" value="ATPASE_C"/>
    <property type="match status" value="1"/>
</dbReference>
<comment type="function">
    <text evidence="1">F(1)F(0) ATP synthase produces ATP from ADP in the presence of a proton or sodium gradient. F-type ATPases consist of two structural domains, F(1) containing the extramembraneous catalytic core and F(0) containing the membrane proton channel, linked together by a central stalk and a peripheral stalk. During catalysis, ATP synthesis in the catalytic domain of F(1) is coupled via a rotary mechanism of the central stalk subunits to proton translocation.</text>
</comment>
<comment type="function">
    <text evidence="1">Key component of the F(0) channel; it plays a direct role in translocation across the membrane. A homomeric c-ring of between 10-14 subunits forms the central stalk rotor element with the F(1) delta and epsilon subunits.</text>
</comment>
<comment type="subunit">
    <text evidence="1">F-type ATPases have 2 components, F(1) - the catalytic core - and F(0) - the membrane proton channel. F(1) has five subunits: alpha(3), beta(3), gamma(1), delta(1), epsilon(1). F(0) has four main subunits: a(1), b(1), b'(1) and c(10-14). The alpha and beta chains form an alternating ring which encloses part of the gamma chain. F(1) is attached to F(0) by a central stalk formed by the gamma and epsilon chains, while a peripheral stalk is formed by the delta, b and b' chains.</text>
</comment>
<comment type="subcellular location">
    <subcellularLocation>
        <location evidence="1">Plastid</location>
        <location evidence="1">Chloroplast thylakoid membrane</location>
        <topology evidence="1">Multi-pass membrane protein</topology>
    </subcellularLocation>
</comment>
<comment type="miscellaneous">
    <text>In plastids the F-type ATPase is also known as CF(1)CF(0).</text>
</comment>
<comment type="similarity">
    <text evidence="1">Belongs to the ATPase C chain family.</text>
</comment>
<protein>
    <recommendedName>
        <fullName evidence="1">ATP synthase subunit c, chloroplastic</fullName>
    </recommendedName>
    <alternativeName>
        <fullName evidence="1">ATP synthase F(0) sector subunit c</fullName>
    </alternativeName>
    <alternativeName>
        <fullName evidence="1">ATPase subunit III</fullName>
    </alternativeName>
    <alternativeName>
        <fullName evidence="1">F-type ATPase subunit c</fullName>
        <shortName evidence="1">F-ATPase subunit c</shortName>
    </alternativeName>
    <alternativeName>
        <fullName evidence="1">Lipid-binding protein</fullName>
    </alternativeName>
</protein>
<accession>B0Z4N0</accession>
<feature type="chain" id="PRO_0000362943" description="ATP synthase subunit c, chloroplastic">
    <location>
        <begin position="1"/>
        <end position="81"/>
    </location>
</feature>
<feature type="transmembrane region" description="Helical" evidence="1">
    <location>
        <begin position="7"/>
        <end position="27"/>
    </location>
</feature>
<feature type="transmembrane region" description="Helical" evidence="1">
    <location>
        <begin position="57"/>
        <end position="77"/>
    </location>
</feature>
<feature type="site" description="Reversibly protonated during proton transport" evidence="1">
    <location>
        <position position="61"/>
    </location>
</feature>
<keyword id="KW-0066">ATP synthesis</keyword>
<keyword id="KW-0138">CF(0)</keyword>
<keyword id="KW-0150">Chloroplast</keyword>
<keyword id="KW-0375">Hydrogen ion transport</keyword>
<keyword id="KW-0406">Ion transport</keyword>
<keyword id="KW-0446">Lipid-binding</keyword>
<keyword id="KW-0472">Membrane</keyword>
<keyword id="KW-0934">Plastid</keyword>
<keyword id="KW-0793">Thylakoid</keyword>
<keyword id="KW-0812">Transmembrane</keyword>
<keyword id="KW-1133">Transmembrane helix</keyword>
<keyword id="KW-0813">Transport</keyword>
<organism>
    <name type="scientific">Oenothera argillicola</name>
    <name type="common">Appalachian evening primrose</name>
    <dbReference type="NCBI Taxonomy" id="3940"/>
    <lineage>
        <taxon>Eukaryota</taxon>
        <taxon>Viridiplantae</taxon>
        <taxon>Streptophyta</taxon>
        <taxon>Embryophyta</taxon>
        <taxon>Tracheophyta</taxon>
        <taxon>Spermatophyta</taxon>
        <taxon>Magnoliopsida</taxon>
        <taxon>eudicotyledons</taxon>
        <taxon>Gunneridae</taxon>
        <taxon>Pentapetalae</taxon>
        <taxon>rosids</taxon>
        <taxon>malvids</taxon>
        <taxon>Myrtales</taxon>
        <taxon>Onagraceae</taxon>
        <taxon>Onagroideae</taxon>
        <taxon>Onagreae</taxon>
        <taxon>Oenothera</taxon>
    </lineage>
</organism>
<sequence length="81" mass="8004">MNPLISAASVIAAGLAVGLASIGPGIGQGTAAGQAVEGIARQPEAEGKIRGTLLLSLAFMEALTIYGLVVALALLFANPFV</sequence>
<evidence type="ECO:0000255" key="1">
    <source>
        <dbReference type="HAMAP-Rule" id="MF_01396"/>
    </source>
</evidence>
<geneLocation type="chloroplast"/>
<name>ATPH_OENAR</name>
<proteinExistence type="inferred from homology"/>
<reference key="1">
    <citation type="journal article" date="2008" name="Nucleic Acids Res.">
        <title>The complete nucleotide sequences of the five genetically distinct plastid genomes of Oenothera, subsection Oenothera: I. Sequence evaluation and plastome evolution.</title>
        <authorList>
            <person name="Greiner S."/>
            <person name="Wang X."/>
            <person name="Rauwolf U."/>
            <person name="Silber M.V."/>
            <person name="Mayer K."/>
            <person name="Meurer J."/>
            <person name="Haberer G."/>
            <person name="Herrmann R.G."/>
        </authorList>
    </citation>
    <scope>NUCLEOTIDE SEQUENCE [LARGE SCALE GENOMIC DNA]</scope>
    <source>
        <strain>cv. Douthat 1</strain>
    </source>
</reference>
<gene>
    <name evidence="1" type="primary">atpH</name>
</gene>